<protein>
    <recommendedName>
        <fullName evidence="6">Kunitz-type anticoagulant protein HA11</fullName>
    </recommendedName>
</protein>
<feature type="signal peptide" evidence="1">
    <location>
        <begin position="1"/>
        <end position="23"/>
    </location>
</feature>
<feature type="chain" id="PRO_5012433466" description="Kunitz-type anticoagulant protein HA11" evidence="1">
    <location>
        <begin position="24"/>
        <end position="101"/>
    </location>
</feature>
<feature type="domain" description="BPTI/Kunitz inhibitor" evidence="2">
    <location>
        <begin position="32"/>
        <end position="88"/>
    </location>
</feature>
<feature type="glycosylation site" description="N-linked (GlcNAc...) asparagine" evidence="3">
    <location>
        <position position="53"/>
    </location>
</feature>
<feature type="glycosylation site" description="N-linked (GlcNAc...) asparagine" evidence="3">
    <location>
        <position position="73"/>
    </location>
</feature>
<feature type="glycosylation site" description="N-linked (GlcNAc...) asparagine" evidence="3">
    <location>
        <position position="92"/>
    </location>
</feature>
<feature type="disulfide bond" evidence="2">
    <location>
        <begin position="32"/>
        <end position="88"/>
    </location>
</feature>
<feature type="disulfide bond" evidence="2">
    <location>
        <begin position="41"/>
        <end position="71"/>
    </location>
</feature>
<feature type="disulfide bond" evidence="2">
    <location>
        <begin position="63"/>
        <end position="84"/>
    </location>
</feature>
<accession>A0A1Q1NL17</accession>
<gene>
    <name evidence="5" type="primary">HA11</name>
</gene>
<comment type="function">
    <text evidence="4">Anticoagulant protein that modulates blood feeding of ticks on vertebrate species (PubMed:28091958). Delays normal clotting of host plasma (PubMed:28091958).</text>
</comment>
<comment type="subcellular location">
    <subcellularLocation>
        <location evidence="6">Secreted</location>
    </subcellularLocation>
</comment>
<comment type="tissue specificity">
    <text evidence="4">Expressed in female salivary gland and ovary.</text>
</comment>
<comment type="developmental stage">
    <text evidence="4">Expressed in eggs, larvae, nymphs and adults.</text>
</comment>
<comment type="disruption phenotype">
    <text evidence="4">RNAi-mediated knockdown results in decreased feeding efficiency of the ticks.</text>
</comment>
<name>HA11_HYAAI</name>
<reference evidence="7" key="1">
    <citation type="journal article" date="2017" name="Exp. Appl. Acarol.">
        <title>Identification and anticoagulant activity of a novel Kunitz-type protein HA11 from the salivary gland of the tick Hyalomma asiaticum.</title>
        <authorList>
            <person name="Zhang H."/>
            <person name="Qiao R."/>
            <person name="Gong H."/>
            <person name="Cao J."/>
            <person name="Zhou Y."/>
            <person name="Zhou J."/>
        </authorList>
    </citation>
    <scope>NUCLEOTIDE SEQUENCE [MRNA]</scope>
    <scope>FUNCTION</scope>
    <scope>TISSUE SPECIFICITY</scope>
    <scope>DEVELOPMENTAL STAGE</scope>
    <scope>DISRUPTION PHENOTYPE</scope>
    <source>
        <tissue evidence="7">Salivary gland</tissue>
    </source>
</reference>
<evidence type="ECO:0000255" key="1"/>
<evidence type="ECO:0000255" key="2">
    <source>
        <dbReference type="PROSITE-ProRule" id="PRU00031"/>
    </source>
</evidence>
<evidence type="ECO:0000255" key="3">
    <source>
        <dbReference type="PROSITE-ProRule" id="PRU00498"/>
    </source>
</evidence>
<evidence type="ECO:0000269" key="4">
    <source>
    </source>
</evidence>
<evidence type="ECO:0000303" key="5">
    <source>
    </source>
</evidence>
<evidence type="ECO:0000305" key="6"/>
<evidence type="ECO:0000312" key="7">
    <source>
        <dbReference type="EMBL" id="AQM57073.1"/>
    </source>
</evidence>
<sequence>MKTYLILATLALIFSAMLTNICAVAFEQPKYCTEAPGDGKCPGEVRPAISTANWTFSKSFGGCVAHRWGSCGNHSNVFPKCLSCMTTCDPENATTYCDGWN</sequence>
<proteinExistence type="evidence at transcript level"/>
<organism>
    <name type="scientific">Hyalomma asiaticum</name>
    <name type="common">Tick</name>
    <dbReference type="NCBI Taxonomy" id="266040"/>
    <lineage>
        <taxon>Eukaryota</taxon>
        <taxon>Metazoa</taxon>
        <taxon>Ecdysozoa</taxon>
        <taxon>Arthropoda</taxon>
        <taxon>Chelicerata</taxon>
        <taxon>Arachnida</taxon>
        <taxon>Acari</taxon>
        <taxon>Parasitiformes</taxon>
        <taxon>Ixodida</taxon>
        <taxon>Ixodoidea</taxon>
        <taxon>Ixodidae</taxon>
        <taxon>Hyalomminae</taxon>
        <taxon>Hyalomma</taxon>
    </lineage>
</organism>
<dbReference type="EMBL" id="KX342060">
    <property type="protein sequence ID" value="AQM57073.1"/>
    <property type="molecule type" value="mRNA"/>
</dbReference>
<dbReference type="SMR" id="A0A1Q1NL17"/>
<dbReference type="GO" id="GO:0005576">
    <property type="term" value="C:extracellular region"/>
    <property type="evidence" value="ECO:0007669"/>
    <property type="project" value="UniProtKB-SubCell"/>
</dbReference>
<dbReference type="GO" id="GO:0004867">
    <property type="term" value="F:serine-type endopeptidase inhibitor activity"/>
    <property type="evidence" value="ECO:0007669"/>
    <property type="project" value="InterPro"/>
</dbReference>
<dbReference type="GO" id="GO:0090729">
    <property type="term" value="F:toxin activity"/>
    <property type="evidence" value="ECO:0007669"/>
    <property type="project" value="UniProtKB-KW"/>
</dbReference>
<dbReference type="GO" id="GO:0044562">
    <property type="term" value="P:envenomation resulting in negative regulation of voltage-gated potassium channel activity in another organism"/>
    <property type="evidence" value="ECO:0007669"/>
    <property type="project" value="UniProtKB-ARBA"/>
</dbReference>
<dbReference type="Gene3D" id="4.10.410.10">
    <property type="entry name" value="Pancreatic trypsin inhibitor Kunitz domain"/>
    <property type="match status" value="1"/>
</dbReference>
<dbReference type="InterPro" id="IPR002223">
    <property type="entry name" value="Kunitz_BPTI"/>
</dbReference>
<dbReference type="InterPro" id="IPR036880">
    <property type="entry name" value="Kunitz_BPTI_sf"/>
</dbReference>
<dbReference type="Pfam" id="PF00014">
    <property type="entry name" value="Kunitz_BPTI"/>
    <property type="match status" value="1"/>
</dbReference>
<dbReference type="SUPFAM" id="SSF57362">
    <property type="entry name" value="BPTI-like"/>
    <property type="match status" value="1"/>
</dbReference>
<dbReference type="PROSITE" id="PS50279">
    <property type="entry name" value="BPTI_KUNITZ_2"/>
    <property type="match status" value="1"/>
</dbReference>
<keyword id="KW-1203">Blood coagulation cascade inhibiting toxin</keyword>
<keyword id="KW-1015">Disulfide bond</keyword>
<keyword id="KW-0325">Glycoprotein</keyword>
<keyword id="KW-1199">Hemostasis impairing toxin</keyword>
<keyword id="KW-0964">Secreted</keyword>
<keyword id="KW-0732">Signal</keyword>
<keyword id="KW-0800">Toxin</keyword>